<gene>
    <name evidence="9" type="primary">TRBV27</name>
</gene>
<dbReference type="EMBL" id="AC244472">
    <property type="status" value="NOT_ANNOTATED_CDS"/>
    <property type="molecule type" value="Genomic_DNA"/>
</dbReference>
<dbReference type="SMR" id="A0A0K0K1C4"/>
<dbReference type="FunCoup" id="A0A0K0K1C4">
    <property type="interactions" value="547"/>
</dbReference>
<dbReference type="IMGT_GENE-DB" id="TRBV27"/>
<dbReference type="GlyCosmos" id="A0A0K0K1C4">
    <property type="glycosylation" value="1 site, No reported glycans"/>
</dbReference>
<dbReference type="GlyGen" id="A0A0K0K1C4">
    <property type="glycosylation" value="1 site"/>
</dbReference>
<dbReference type="BioMuta" id="TRBV27"/>
<dbReference type="MassIVE" id="A0A0K0K1C4"/>
<dbReference type="Ensembl" id="ENST00000390399.3">
    <property type="protein sequence ID" value="ENSP00000374922.3"/>
    <property type="gene ID" value="ENSG00000211752.3"/>
</dbReference>
<dbReference type="Ensembl" id="ENST00000633283.1">
    <property type="protein sequence ID" value="ENSP00000488274.1"/>
    <property type="gene ID" value="ENSG00000282234.1"/>
</dbReference>
<dbReference type="UCSC" id="uc033amu.2">
    <property type="organism name" value="human"/>
</dbReference>
<dbReference type="AGR" id="HGNC:12208"/>
<dbReference type="GeneCards" id="TRBV27"/>
<dbReference type="HGNC" id="HGNC:12208">
    <property type="gene designation" value="TRBV27"/>
</dbReference>
<dbReference type="HPA" id="ENSG00000211752">
    <property type="expression patterns" value="Tissue enriched (lymphoid)"/>
</dbReference>
<dbReference type="neXtProt" id="NX_A0A0K0K1C4"/>
<dbReference type="OpenTargets" id="ENSG00000211752"/>
<dbReference type="VEuPathDB" id="HostDB:ENSG00000211752"/>
<dbReference type="GeneTree" id="ENSGT00940000163595"/>
<dbReference type="InParanoid" id="A0A0K0K1C4"/>
<dbReference type="OMA" id="QNMNHEY"/>
<dbReference type="OrthoDB" id="9803478at2759"/>
<dbReference type="PAN-GO" id="A0A0K0K1C4">
    <property type="GO annotations" value="2 GO annotations based on evolutionary models"/>
</dbReference>
<dbReference type="ChiTaRS" id="TRBV27">
    <property type="organism name" value="human"/>
</dbReference>
<dbReference type="Pharos" id="A0A0K0K1C4">
    <property type="development level" value="Tdark"/>
</dbReference>
<dbReference type="PRO" id="PR:A0A0K0K1C4"/>
<dbReference type="Proteomes" id="UP000005640">
    <property type="component" value="Chromosome 7"/>
</dbReference>
<dbReference type="RNAct" id="A0A0K0K1C4">
    <property type="molecule type" value="protein"/>
</dbReference>
<dbReference type="Bgee" id="ENSG00000211752">
    <property type="expression patterns" value="Expressed in lymph node and 88 other cell types or tissues"/>
</dbReference>
<dbReference type="GO" id="GO:0005886">
    <property type="term" value="C:plasma membrane"/>
    <property type="evidence" value="ECO:0000318"/>
    <property type="project" value="GO_Central"/>
</dbReference>
<dbReference type="GO" id="GO:0042101">
    <property type="term" value="C:T cell receptor complex"/>
    <property type="evidence" value="ECO:0007669"/>
    <property type="project" value="UniProtKB-KW"/>
</dbReference>
<dbReference type="GO" id="GO:0002250">
    <property type="term" value="P:adaptive immune response"/>
    <property type="evidence" value="ECO:0007669"/>
    <property type="project" value="UniProtKB-KW"/>
</dbReference>
<dbReference type="GO" id="GO:0007166">
    <property type="term" value="P:cell surface receptor signaling pathway"/>
    <property type="evidence" value="ECO:0000318"/>
    <property type="project" value="GO_Central"/>
</dbReference>
<dbReference type="Gene3D" id="2.60.40.10">
    <property type="entry name" value="Immunoglobulins"/>
    <property type="match status" value="1"/>
</dbReference>
<dbReference type="InterPro" id="IPR007110">
    <property type="entry name" value="Ig-like_dom"/>
</dbReference>
<dbReference type="InterPro" id="IPR036179">
    <property type="entry name" value="Ig-like_dom_sf"/>
</dbReference>
<dbReference type="InterPro" id="IPR013783">
    <property type="entry name" value="Ig-like_fold"/>
</dbReference>
<dbReference type="InterPro" id="IPR013106">
    <property type="entry name" value="Ig_V-set"/>
</dbReference>
<dbReference type="InterPro" id="IPR050413">
    <property type="entry name" value="TCR_beta_variable"/>
</dbReference>
<dbReference type="PANTHER" id="PTHR23268:SF110">
    <property type="entry name" value="T CELL RECEPTOR BETA VARIABLE 27"/>
    <property type="match status" value="1"/>
</dbReference>
<dbReference type="PANTHER" id="PTHR23268">
    <property type="entry name" value="T-CELL RECEPTOR BETA CHAIN"/>
    <property type="match status" value="1"/>
</dbReference>
<dbReference type="Pfam" id="PF07686">
    <property type="entry name" value="V-set"/>
    <property type="match status" value="1"/>
</dbReference>
<dbReference type="SMART" id="SM00406">
    <property type="entry name" value="IGv"/>
    <property type="match status" value="1"/>
</dbReference>
<dbReference type="SUPFAM" id="SSF48726">
    <property type="entry name" value="Immunoglobulin"/>
    <property type="match status" value="1"/>
</dbReference>
<dbReference type="PROSITE" id="PS50835">
    <property type="entry name" value="IG_LIKE"/>
    <property type="match status" value="1"/>
</dbReference>
<accession>A0A0K0K1C4</accession>
<accession>A0A075B6N5</accession>
<accession>A0A0A6YYR2</accession>
<accession>A0A5B5</accession>
<reference key="1">
    <citation type="journal article" date="2003" name="Nature">
        <title>The DNA sequence of human chromosome 7.</title>
        <authorList>
            <person name="Hillier L.W."/>
            <person name="Fulton R.S."/>
            <person name="Fulton L.A."/>
            <person name="Graves T.A."/>
            <person name="Pepin K.H."/>
            <person name="Wagner-McPherson C."/>
            <person name="Layman D."/>
            <person name="Maas J."/>
            <person name="Jaeger S."/>
            <person name="Walker R."/>
            <person name="Wylie K."/>
            <person name="Sekhon M."/>
            <person name="Becker M.C."/>
            <person name="O'Laughlin M.D."/>
            <person name="Schaller M.E."/>
            <person name="Fewell G.A."/>
            <person name="Delehaunty K.D."/>
            <person name="Miner T.L."/>
            <person name="Nash W.E."/>
            <person name="Cordes M."/>
            <person name="Du H."/>
            <person name="Sun H."/>
            <person name="Edwards J."/>
            <person name="Bradshaw-Cordum H."/>
            <person name="Ali J."/>
            <person name="Andrews S."/>
            <person name="Isak A."/>
            <person name="Vanbrunt A."/>
            <person name="Nguyen C."/>
            <person name="Du F."/>
            <person name="Lamar B."/>
            <person name="Courtney L."/>
            <person name="Kalicki J."/>
            <person name="Ozersky P."/>
            <person name="Bielicki L."/>
            <person name="Scott K."/>
            <person name="Holmes A."/>
            <person name="Harkins R."/>
            <person name="Harris A."/>
            <person name="Strong C.M."/>
            <person name="Hou S."/>
            <person name="Tomlinson C."/>
            <person name="Dauphin-Kohlberg S."/>
            <person name="Kozlowicz-Reilly A."/>
            <person name="Leonard S."/>
            <person name="Rohlfing T."/>
            <person name="Rock S.M."/>
            <person name="Tin-Wollam A.-M."/>
            <person name="Abbott A."/>
            <person name="Minx P."/>
            <person name="Maupin R."/>
            <person name="Strowmatt C."/>
            <person name="Latreille P."/>
            <person name="Miller N."/>
            <person name="Johnson D."/>
            <person name="Murray J."/>
            <person name="Woessner J.P."/>
            <person name="Wendl M.C."/>
            <person name="Yang S.-P."/>
            <person name="Schultz B.R."/>
            <person name="Wallis J.W."/>
            <person name="Spieth J."/>
            <person name="Bieri T.A."/>
            <person name="Nelson J.O."/>
            <person name="Berkowicz N."/>
            <person name="Wohldmann P.E."/>
            <person name="Cook L.L."/>
            <person name="Hickenbotham M.T."/>
            <person name="Eldred J."/>
            <person name="Williams D."/>
            <person name="Bedell J.A."/>
            <person name="Mardis E.R."/>
            <person name="Clifton S.W."/>
            <person name="Chissoe S.L."/>
            <person name="Marra M.A."/>
            <person name="Raymond C."/>
            <person name="Haugen E."/>
            <person name="Gillett W."/>
            <person name="Zhou Y."/>
            <person name="James R."/>
            <person name="Phelps K."/>
            <person name="Iadanoto S."/>
            <person name="Bubb K."/>
            <person name="Simms E."/>
            <person name="Levy R."/>
            <person name="Clendenning J."/>
            <person name="Kaul R."/>
            <person name="Kent W.J."/>
            <person name="Furey T.S."/>
            <person name="Baertsch R.A."/>
            <person name="Brent M.R."/>
            <person name="Keibler E."/>
            <person name="Flicek P."/>
            <person name="Bork P."/>
            <person name="Suyama M."/>
            <person name="Bailey J.A."/>
            <person name="Portnoy M.E."/>
            <person name="Torrents D."/>
            <person name="Chinwalla A.T."/>
            <person name="Gish W.R."/>
            <person name="Eddy S.R."/>
            <person name="McPherson J.D."/>
            <person name="Olson M.V."/>
            <person name="Eichler E.E."/>
            <person name="Green E.D."/>
            <person name="Waterston R.H."/>
            <person name="Wilson R.K."/>
        </authorList>
    </citation>
    <scope>NUCLEOTIDE SEQUENCE [LARGE SCALE GENOMIC DNA] (IMGT ALLELE TRBV27*01)</scope>
</reference>
<reference key="2">
    <citation type="book" date="2001" name="The T Cell Receptor FactsBook.">
        <title>The T Cell Receptor FactsBook.</title>
        <editorList>
            <person name="Lefranc M.P."/>
            <person name="Lefranc G."/>
        </editorList>
        <authorList>
            <person name="Lefranc M.P."/>
            <person name="Lefranc G."/>
        </authorList>
    </citation>
    <scope>NOMENCLATURE</scope>
</reference>
<reference key="3">
    <citation type="journal article" date="2004" name="Nat. Rev. Immunol.">
        <title>The many important facets of T-cell repertoire diversity.</title>
        <authorList>
            <person name="Nikolich-Zugich J."/>
            <person name="Slifka M.K."/>
            <person name="Messaoudi I."/>
        </authorList>
    </citation>
    <scope>REVIEW ON T CELL REPERTOIRE DIVERSITY</scope>
</reference>
<reference key="4">
    <citation type="journal article" date="2010" name="Cold Spring Harb. Perspect. Biol.">
        <title>Structural biology of the T-cell receptor: insights into receptor assembly, ligand recognition, and initiation of signaling.</title>
        <authorList>
            <person name="Wucherpfennig K.W."/>
            <person name="Gagnon E."/>
            <person name="Call M.J."/>
            <person name="Huseby E.S."/>
            <person name="Call M.E."/>
        </authorList>
    </citation>
    <scope>REVIEW ON T CELL RECEPTOR-CD3 COMPLEX ASSEMBLY</scope>
    <scope>SUBCELLULAR LOCATION</scope>
</reference>
<reference key="5">
    <citation type="journal article" date="2013" name="Nat. Rev. Immunol.">
        <title>T cell receptor signalling networks: branched, diversified and bounded.</title>
        <authorList>
            <person name="Brownlie R.J."/>
            <person name="Zamoyska R."/>
        </authorList>
    </citation>
    <scope>REVIEW ON T CELL RECEPTOR SIGNALING</scope>
</reference>
<reference key="6">
    <citation type="journal article" date="2014" name="Front. Immunol.">
        <title>Immunoglobulin and T Cell Receptor Genes: IMGT((R)) and the Birth and Rise of Immunoinformatics.</title>
        <authorList>
            <person name="Lefranc M.P."/>
        </authorList>
    </citation>
    <scope>NOMENCLATURE</scope>
</reference>
<reference key="7">
    <citation type="journal article" date="2015" name="Annu. Rev. Immunol.">
        <title>T cell antigen receptor recognition of antigen-presenting molecules.</title>
        <authorList>
            <person name="Rossjohn J."/>
            <person name="Gras S."/>
            <person name="Miles J.J."/>
            <person name="Turner S.J."/>
            <person name="Godfrey D.I."/>
            <person name="McCluskey J."/>
        </authorList>
    </citation>
    <scope>REVIEW ON FUNCTION</scope>
</reference>
<protein>
    <recommendedName>
        <fullName evidence="9">T cell receptor beta variable 27</fullName>
    </recommendedName>
</protein>
<feature type="signal peptide" evidence="1">
    <location>
        <begin position="1"/>
        <end position="21"/>
    </location>
</feature>
<feature type="chain" id="PRO_5014517109" description="T cell receptor beta variable 27" evidence="1">
    <location>
        <begin position="22"/>
        <end position="114"/>
    </location>
</feature>
<feature type="domain" description="Ig-like" evidence="2">
    <location>
        <begin position="22"/>
        <end position="114" status="greater than"/>
    </location>
</feature>
<feature type="glycosylation site" description="N-linked (GlcNAc...) asparagine" evidence="3">
    <location>
        <position position="103"/>
    </location>
</feature>
<feature type="disulfide bond" evidence="2">
    <location>
        <begin position="42"/>
        <end position="110"/>
    </location>
</feature>
<feature type="non-terminal residue">
    <location>
        <position position="114"/>
    </location>
</feature>
<comment type="function">
    <text evidence="4 6 7 8">V region of the variable domain of T cell receptor (TR) beta chain that participates in the antigen recognition (PubMed:24600447). Alpha-beta T cell receptors are antigen specific receptors which are essential to the immune response and are present on the cell surface of T lymphocytes. Recognize peptide-major histocompatibility (MH) (pMH) complexes that are displayed by antigen presenting cells (APC), a prerequisite for efficient T cell adaptive immunity against pathogens (PubMed:25493333). Binding of alpha-beta TR to pMH complex initiates TR-CD3 clustering on the cell surface and intracellular activation of LCK that phosphorylates the ITAM motifs of CD3G, CD3D, CD3E and CD247 enabling the recruitment of ZAP70. In turn ZAP70 phosphorylates LAT, which recruits numerous signaling molecules to form the LAT signalosome. The LAT signalosome propagates signal branching to three major signaling pathways, the calcium, the mitogen-activated protein kinase (MAPK) kinase and the nuclear factor NF-kappa-B (NF-kB) pathways, leading to the mobilization of transcription factors that are critical for gene expression and essential for T cell growth and differentiation (PubMed:23524462). The T cell repertoire is generated in the thymus, by V-(D)-J rearrangement. This repertoire is then shaped by intrathymic selection events to generate a peripheral T cell pool of self-MH restricted, non-autoaggressive T cells. Post-thymic interaction of alpha-beta TR with the pMH complexes shapes TR structural and functional avidity (PubMed:15040585).</text>
</comment>
<comment type="subunit">
    <text evidence="5">Alpha-beta TR is a heterodimer composed of an alpha and beta chain; disulfide-linked. The alpha-beta TR is associated with the transmembrane signaling CD3 coreceptor proteins to form the TR-CD3 (TcR or TCR). The assembly of alpha-beta TR heterodimers with CD3 occurs in the endoplasmic reticulum where a single alpha-beta TR heterodimer associates with one CD3D-CD3E heterodimer, one CD3G-CD3E heterodimer and one CD247 homodimer forming a stable octameric structure. CD3D-CD3E and CD3G-CD3E heterodimers preferentially associate with TR alpha and TR beta chains, respectively. The association of the CD247 homodimer is the last step of TcR assembly in the endoplasmic reticulum and is required for transport to the cell surface.</text>
</comment>
<comment type="subcellular location">
    <subcellularLocation>
        <location evidence="5">Cell membrane</location>
    </subcellularLocation>
</comment>
<comment type="polymorphism">
    <text evidence="10">There are several alleles. The sequence shown is that of IMGT allele TRBV27*01.</text>
</comment>
<proteinExistence type="evidence at protein level"/>
<keyword id="KW-1064">Adaptive immunity</keyword>
<keyword id="KW-1003">Cell membrane</keyword>
<keyword id="KW-1015">Disulfide bond</keyword>
<keyword id="KW-0325">Glycoprotein</keyword>
<keyword id="KW-0391">Immunity</keyword>
<keyword id="KW-0393">Immunoglobulin domain</keyword>
<keyword id="KW-0472">Membrane</keyword>
<keyword id="KW-1267">Proteomics identification</keyword>
<keyword id="KW-0675">Receptor</keyword>
<keyword id="KW-1185">Reference proteome</keyword>
<keyword id="KW-0732">Signal</keyword>
<keyword id="KW-1279">T cell receptor</keyword>
<evidence type="ECO:0000255" key="1"/>
<evidence type="ECO:0000255" key="2">
    <source>
        <dbReference type="PROSITE-ProRule" id="PRU00114"/>
    </source>
</evidence>
<evidence type="ECO:0000255" key="3">
    <source>
        <dbReference type="PROSITE-ProRule" id="PRU00498"/>
    </source>
</evidence>
<evidence type="ECO:0000303" key="4">
    <source>
    </source>
</evidence>
<evidence type="ECO:0000303" key="5">
    <source>
    </source>
</evidence>
<evidence type="ECO:0000303" key="6">
    <source>
    </source>
</evidence>
<evidence type="ECO:0000303" key="7">
    <source>
    </source>
</evidence>
<evidence type="ECO:0000303" key="8">
    <source>
    </source>
</evidence>
<evidence type="ECO:0000303" key="9">
    <source ref="2"/>
</evidence>
<evidence type="ECO:0000305" key="10"/>
<name>TVB27_HUMAN</name>
<sequence>MGPQLLGYVVLCLLGAGPLEAQVTQNPRYLITVTGKKLTVTCSQNMNHEYMSWYRQDPGLGLRQIYYSMNVEVTDKGDVPEGYKVSRKEKRNFPLILESPSPNQTSLYFCASSL</sequence>
<organism>
    <name type="scientific">Homo sapiens</name>
    <name type="common">Human</name>
    <dbReference type="NCBI Taxonomy" id="9606"/>
    <lineage>
        <taxon>Eukaryota</taxon>
        <taxon>Metazoa</taxon>
        <taxon>Chordata</taxon>
        <taxon>Craniata</taxon>
        <taxon>Vertebrata</taxon>
        <taxon>Euteleostomi</taxon>
        <taxon>Mammalia</taxon>
        <taxon>Eutheria</taxon>
        <taxon>Euarchontoglires</taxon>
        <taxon>Primates</taxon>
        <taxon>Haplorrhini</taxon>
        <taxon>Catarrhini</taxon>
        <taxon>Hominidae</taxon>
        <taxon>Homo</taxon>
    </lineage>
</organism>